<protein>
    <recommendedName>
        <fullName>Uncharacterized protein HI_1339/HI_1462.1</fullName>
    </recommendedName>
</protein>
<keyword id="KW-1185">Reference proteome</keyword>
<comment type="similarity">
    <text evidence="2">Belongs to the LEA type 1 family.</text>
</comment>
<comment type="sequence caution" evidence="2">
    <conflict type="erroneous initiation">
        <sequence resource="EMBL-CDS" id="AAC23114"/>
    </conflict>
</comment>
<sequence length="129" mass="13779">MEKIMKKLTLALVLGSALVVTGCFDKQEAKQKVEDTKQTVASVASETKDAAANTMTEVKEKAQQLSTDVKNKVAEKVEDAKEVIKSATEAASEKVGEMKEAASEKASEMKEAVSEKATQAVDAVKEATK</sequence>
<reference key="1">
    <citation type="journal article" date="1995" name="Science">
        <title>Whole-genome random sequencing and assembly of Haemophilus influenzae Rd.</title>
        <authorList>
            <person name="Fleischmann R.D."/>
            <person name="Adams M.D."/>
            <person name="White O."/>
            <person name="Clayton R.A."/>
            <person name="Kirkness E.F."/>
            <person name="Kerlavage A.R."/>
            <person name="Bult C.J."/>
            <person name="Tomb J.-F."/>
            <person name="Dougherty B.A."/>
            <person name="Merrick J.M."/>
            <person name="McKenney K."/>
            <person name="Sutton G.G."/>
            <person name="FitzHugh W."/>
            <person name="Fields C.A."/>
            <person name="Gocayne J.D."/>
            <person name="Scott J.D."/>
            <person name="Shirley R."/>
            <person name="Liu L.-I."/>
            <person name="Glodek A."/>
            <person name="Kelley J.M."/>
            <person name="Weidman J.F."/>
            <person name="Phillips C.A."/>
            <person name="Spriggs T."/>
            <person name="Hedblom E."/>
            <person name="Cotton M.D."/>
            <person name="Utterback T.R."/>
            <person name="Hanna M.C."/>
            <person name="Nguyen D.T."/>
            <person name="Saudek D.M."/>
            <person name="Brandon R.C."/>
            <person name="Fine L.D."/>
            <person name="Fritchman J.L."/>
            <person name="Fuhrmann J.L."/>
            <person name="Geoghagen N.S.M."/>
            <person name="Gnehm C.L."/>
            <person name="McDonald L.A."/>
            <person name="Small K.V."/>
            <person name="Fraser C.M."/>
            <person name="Smith H.O."/>
            <person name="Venter J.C."/>
        </authorList>
    </citation>
    <scope>NUCLEOTIDE SEQUENCE [LARGE SCALE GENOMIC DNA]</scope>
    <source>
        <strain>ATCC 51907 / DSM 11121 / KW20 / Rd</strain>
    </source>
</reference>
<reference key="2">
    <citation type="journal article" date="2000" name="Electrophoresis">
        <title>Two-dimensional map of the proteome of Haemophilus influenzae.</title>
        <authorList>
            <person name="Langen H."/>
            <person name="Takacs B."/>
            <person name="Evers S."/>
            <person name="Berndt P."/>
            <person name="Lahm H.W."/>
            <person name="Wipf B."/>
            <person name="Gray C."/>
            <person name="Fountoulakis M."/>
        </authorList>
    </citation>
    <scope>IDENTIFICATION BY MASS SPECTROMETRY</scope>
    <source>
        <strain>ATCC 51907 / DSM 11121 / KW20 / Rd</strain>
    </source>
</reference>
<gene>
    <name type="ordered locus">HI_1339</name>
</gene>
<gene>
    <name type="ordered locus">HI_1462.1</name>
</gene>
<evidence type="ECO:0000256" key="1">
    <source>
        <dbReference type="SAM" id="MobiDB-lite"/>
    </source>
</evidence>
<evidence type="ECO:0000305" key="2"/>
<proteinExistence type="evidence at protein level"/>
<name>Y1339_HAEIN</name>
<dbReference type="EMBL" id="L42023">
    <property type="protein sequence ID" value="AAC22992.1"/>
    <property type="molecule type" value="Genomic_DNA"/>
</dbReference>
<dbReference type="EMBL" id="L42023">
    <property type="protein sequence ID" value="AAC23114.1"/>
    <property type="status" value="ALT_INIT"/>
    <property type="molecule type" value="Genomic_DNA"/>
</dbReference>
<dbReference type="PIR" id="F64117">
    <property type="entry name" value="F64117"/>
</dbReference>
<dbReference type="RefSeq" id="NP_439490.1">
    <property type="nucleotide sequence ID" value="NC_000907.1"/>
</dbReference>
<dbReference type="RefSeq" id="NP_439612.2">
    <property type="nucleotide sequence ID" value="NC_000907.1"/>
</dbReference>
<dbReference type="SMR" id="P71378"/>
<dbReference type="EnsemblBacteria" id="AAC22992">
    <property type="protein sequence ID" value="AAC22992"/>
    <property type="gene ID" value="HI_1339"/>
</dbReference>
<dbReference type="EnsemblBacteria" id="AAC23114">
    <property type="protein sequence ID" value="AAC23114"/>
    <property type="gene ID" value="HI_1462.1"/>
</dbReference>
<dbReference type="KEGG" id="hin:HI_1339"/>
<dbReference type="KEGG" id="hin:HI_1462.1"/>
<dbReference type="PATRIC" id="fig|71421.8.peg.1391"/>
<dbReference type="HOGENOM" id="CLU_101364_0_0_6"/>
<dbReference type="OrthoDB" id="5691044at2"/>
<dbReference type="Proteomes" id="UP000000579">
    <property type="component" value="Chromosome"/>
</dbReference>
<dbReference type="Gene3D" id="6.10.140.1430">
    <property type="match status" value="2"/>
</dbReference>
<dbReference type="SUPFAM" id="SSF58113">
    <property type="entry name" value="Apolipoprotein A-I"/>
    <property type="match status" value="1"/>
</dbReference>
<dbReference type="PROSITE" id="PS51257">
    <property type="entry name" value="PROKAR_LIPOPROTEIN"/>
    <property type="match status" value="1"/>
</dbReference>
<feature type="chain" id="PRO_0000078029" description="Uncharacterized protein HI_1339/HI_1462.1">
    <location>
        <begin position="1"/>
        <end position="129"/>
    </location>
</feature>
<feature type="region of interest" description="Disordered" evidence="1">
    <location>
        <begin position="91"/>
        <end position="129"/>
    </location>
</feature>
<feature type="compositionally biased region" description="Basic and acidic residues" evidence="1">
    <location>
        <begin position="91"/>
        <end position="114"/>
    </location>
</feature>
<organism>
    <name type="scientific">Haemophilus influenzae (strain ATCC 51907 / DSM 11121 / KW20 / Rd)</name>
    <dbReference type="NCBI Taxonomy" id="71421"/>
    <lineage>
        <taxon>Bacteria</taxon>
        <taxon>Pseudomonadati</taxon>
        <taxon>Pseudomonadota</taxon>
        <taxon>Gammaproteobacteria</taxon>
        <taxon>Pasteurellales</taxon>
        <taxon>Pasteurellaceae</taxon>
        <taxon>Haemophilus</taxon>
    </lineage>
</organism>
<accession>P71378</accession>
<accession>O86240</accession>